<name>RL35_CLOP1</name>
<organism>
    <name type="scientific">Clostridium perfringens (strain ATCC 13124 / DSM 756 / JCM 1290 / NCIMB 6125 / NCTC 8237 / Type A)</name>
    <dbReference type="NCBI Taxonomy" id="195103"/>
    <lineage>
        <taxon>Bacteria</taxon>
        <taxon>Bacillati</taxon>
        <taxon>Bacillota</taxon>
        <taxon>Clostridia</taxon>
        <taxon>Eubacteriales</taxon>
        <taxon>Clostridiaceae</taxon>
        <taxon>Clostridium</taxon>
    </lineage>
</organism>
<gene>
    <name evidence="1" type="primary">rpmI</name>
    <name type="ordered locus">CPF_2145</name>
</gene>
<sequence length="65" mass="7455">MPKMKTHRGAAKRFKKTGTGKLKRAHAFTSHILTKKSAKRKRNLRKTGYVSTAQEKAMKKLLPYL</sequence>
<evidence type="ECO:0000255" key="1">
    <source>
        <dbReference type="HAMAP-Rule" id="MF_00514"/>
    </source>
</evidence>
<evidence type="ECO:0000256" key="2">
    <source>
        <dbReference type="SAM" id="MobiDB-lite"/>
    </source>
</evidence>
<evidence type="ECO:0000305" key="3"/>
<dbReference type="EMBL" id="CP000246">
    <property type="protein sequence ID" value="ABG84762.1"/>
    <property type="molecule type" value="Genomic_DNA"/>
</dbReference>
<dbReference type="RefSeq" id="WP_003451643.1">
    <property type="nucleotide sequence ID" value="NC_008261.1"/>
</dbReference>
<dbReference type="SMR" id="Q0TP67"/>
<dbReference type="STRING" id="195103.CPF_2145"/>
<dbReference type="PaxDb" id="195103-CPF_2145"/>
<dbReference type="GeneID" id="93001574"/>
<dbReference type="KEGG" id="cpf:CPF_2145"/>
<dbReference type="eggNOG" id="COG0291">
    <property type="taxonomic scope" value="Bacteria"/>
</dbReference>
<dbReference type="HOGENOM" id="CLU_169643_3_0_9"/>
<dbReference type="Proteomes" id="UP000001823">
    <property type="component" value="Chromosome"/>
</dbReference>
<dbReference type="GO" id="GO:0022625">
    <property type="term" value="C:cytosolic large ribosomal subunit"/>
    <property type="evidence" value="ECO:0007669"/>
    <property type="project" value="TreeGrafter"/>
</dbReference>
<dbReference type="GO" id="GO:0003735">
    <property type="term" value="F:structural constituent of ribosome"/>
    <property type="evidence" value="ECO:0007669"/>
    <property type="project" value="InterPro"/>
</dbReference>
<dbReference type="GO" id="GO:0006412">
    <property type="term" value="P:translation"/>
    <property type="evidence" value="ECO:0007669"/>
    <property type="project" value="UniProtKB-UniRule"/>
</dbReference>
<dbReference type="FunFam" id="4.10.410.60:FF:000001">
    <property type="entry name" value="50S ribosomal protein L35"/>
    <property type="match status" value="1"/>
</dbReference>
<dbReference type="Gene3D" id="4.10.410.60">
    <property type="match status" value="1"/>
</dbReference>
<dbReference type="HAMAP" id="MF_00514">
    <property type="entry name" value="Ribosomal_bL35"/>
    <property type="match status" value="1"/>
</dbReference>
<dbReference type="InterPro" id="IPR001706">
    <property type="entry name" value="Ribosomal_bL35"/>
</dbReference>
<dbReference type="InterPro" id="IPR021137">
    <property type="entry name" value="Ribosomal_bL35-like"/>
</dbReference>
<dbReference type="InterPro" id="IPR018265">
    <property type="entry name" value="Ribosomal_bL35_CS"/>
</dbReference>
<dbReference type="InterPro" id="IPR037229">
    <property type="entry name" value="Ribosomal_bL35_sf"/>
</dbReference>
<dbReference type="NCBIfam" id="TIGR00001">
    <property type="entry name" value="rpmI_bact"/>
    <property type="match status" value="1"/>
</dbReference>
<dbReference type="PANTHER" id="PTHR33343">
    <property type="entry name" value="54S RIBOSOMAL PROTEIN BL35M"/>
    <property type="match status" value="1"/>
</dbReference>
<dbReference type="PANTHER" id="PTHR33343:SF1">
    <property type="entry name" value="LARGE RIBOSOMAL SUBUNIT PROTEIN BL35M"/>
    <property type="match status" value="1"/>
</dbReference>
<dbReference type="Pfam" id="PF01632">
    <property type="entry name" value="Ribosomal_L35p"/>
    <property type="match status" value="1"/>
</dbReference>
<dbReference type="PRINTS" id="PR00064">
    <property type="entry name" value="RIBOSOMALL35"/>
</dbReference>
<dbReference type="SUPFAM" id="SSF143034">
    <property type="entry name" value="L35p-like"/>
    <property type="match status" value="1"/>
</dbReference>
<dbReference type="PROSITE" id="PS00936">
    <property type="entry name" value="RIBOSOMAL_L35"/>
    <property type="match status" value="1"/>
</dbReference>
<feature type="chain" id="PRO_0000258661" description="Large ribosomal subunit protein bL35">
    <location>
        <begin position="1"/>
        <end position="65"/>
    </location>
</feature>
<feature type="region of interest" description="Disordered" evidence="2">
    <location>
        <begin position="1"/>
        <end position="23"/>
    </location>
</feature>
<keyword id="KW-0687">Ribonucleoprotein</keyword>
<keyword id="KW-0689">Ribosomal protein</keyword>
<reference key="1">
    <citation type="journal article" date="2006" name="Genome Res.">
        <title>Skewed genomic variability in strains of the toxigenic bacterial pathogen, Clostridium perfringens.</title>
        <authorList>
            <person name="Myers G.S.A."/>
            <person name="Rasko D.A."/>
            <person name="Cheung J.K."/>
            <person name="Ravel J."/>
            <person name="Seshadri R."/>
            <person name="DeBoy R.T."/>
            <person name="Ren Q."/>
            <person name="Varga J."/>
            <person name="Awad M.M."/>
            <person name="Brinkac L.M."/>
            <person name="Daugherty S.C."/>
            <person name="Haft D.H."/>
            <person name="Dodson R.J."/>
            <person name="Madupu R."/>
            <person name="Nelson W.C."/>
            <person name="Rosovitz M.J."/>
            <person name="Sullivan S.A."/>
            <person name="Khouri H."/>
            <person name="Dimitrov G.I."/>
            <person name="Watkins K.L."/>
            <person name="Mulligan S."/>
            <person name="Benton J."/>
            <person name="Radune D."/>
            <person name="Fisher D.J."/>
            <person name="Atkins H.S."/>
            <person name="Hiscox T."/>
            <person name="Jost B.H."/>
            <person name="Billington S.J."/>
            <person name="Songer J.G."/>
            <person name="McClane B.A."/>
            <person name="Titball R.W."/>
            <person name="Rood J.I."/>
            <person name="Melville S.B."/>
            <person name="Paulsen I.T."/>
        </authorList>
    </citation>
    <scope>NUCLEOTIDE SEQUENCE [LARGE SCALE GENOMIC DNA]</scope>
    <source>
        <strain>ATCC 13124 / DSM 756 / JCM 1290 / NCIMB 6125 / NCTC 8237 / S 107 / Type A</strain>
    </source>
</reference>
<comment type="similarity">
    <text evidence="1">Belongs to the bacterial ribosomal protein bL35 family.</text>
</comment>
<proteinExistence type="inferred from homology"/>
<protein>
    <recommendedName>
        <fullName evidence="1">Large ribosomal subunit protein bL35</fullName>
    </recommendedName>
    <alternativeName>
        <fullName evidence="3">50S ribosomal protein L35</fullName>
    </alternativeName>
</protein>
<accession>Q0TP67</accession>